<proteinExistence type="evidence at protein level"/>
<dbReference type="EMBL" id="L01124">
    <property type="protein sequence ID" value="AAA60283.1"/>
    <property type="molecule type" value="mRNA"/>
</dbReference>
<dbReference type="EMBL" id="X79239">
    <property type="protein sequence ID" value="CAA55821.1"/>
    <property type="molecule type" value="mRNA"/>
</dbReference>
<dbReference type="EMBL" id="D88010">
    <property type="protein sequence ID" value="BAA13528.1"/>
    <property type="molecule type" value="Genomic_DNA"/>
</dbReference>
<dbReference type="EMBL" id="AK312060">
    <property type="protein sequence ID" value="BAG34996.1"/>
    <property type="molecule type" value="mRNA"/>
</dbReference>
<dbReference type="EMBL" id="CH471064">
    <property type="protein sequence ID" value="EAW68448.1"/>
    <property type="molecule type" value="Genomic_DNA"/>
</dbReference>
<dbReference type="EMBL" id="BC000475">
    <property type="protein sequence ID" value="AAH00475.1"/>
    <property type="molecule type" value="mRNA"/>
</dbReference>
<dbReference type="EMBL" id="BC006772">
    <property type="protein sequence ID" value="AAH06772.1"/>
    <property type="molecule type" value="mRNA"/>
</dbReference>
<dbReference type="EMBL" id="BC029732">
    <property type="protein sequence ID" value="AAH29732.1"/>
    <property type="molecule type" value="mRNA"/>
</dbReference>
<dbReference type="EMBL" id="BC066322">
    <property type="protein sequence ID" value="AAH66322.1"/>
    <property type="molecule type" value="mRNA"/>
</dbReference>
<dbReference type="EMBL" id="BC100032">
    <property type="protein sequence ID" value="AAI00033.1"/>
    <property type="molecule type" value="mRNA"/>
</dbReference>
<dbReference type="EMBL" id="L05090">
    <property type="protein sequence ID" value="AAC15854.1"/>
    <property type="molecule type" value="mRNA"/>
</dbReference>
<dbReference type="CCDS" id="CCDS7823.1"/>
<dbReference type="PIR" id="S34109">
    <property type="entry name" value="S34109"/>
</dbReference>
<dbReference type="RefSeq" id="NP_001008.1">
    <property type="nucleotide sequence ID" value="NM_001017.3"/>
</dbReference>
<dbReference type="PDB" id="4UG0">
    <property type="method" value="EM"/>
    <property type="chains" value="SN=1-151"/>
</dbReference>
<dbReference type="PDB" id="4V6X">
    <property type="method" value="EM"/>
    <property type="resolution" value="5.00 A"/>
    <property type="chains" value="AN=1-151"/>
</dbReference>
<dbReference type="PDB" id="5A2Q">
    <property type="method" value="EM"/>
    <property type="resolution" value="3.90 A"/>
    <property type="chains" value="N=1-151"/>
</dbReference>
<dbReference type="PDB" id="5AJ0">
    <property type="method" value="EM"/>
    <property type="resolution" value="3.50 A"/>
    <property type="chains" value="BN=1-151"/>
</dbReference>
<dbReference type="PDB" id="5FLX">
    <property type="method" value="EM"/>
    <property type="resolution" value="3.90 A"/>
    <property type="chains" value="N=1-151"/>
</dbReference>
<dbReference type="PDB" id="5LKS">
    <property type="method" value="EM"/>
    <property type="resolution" value="3.60 A"/>
    <property type="chains" value="SN=1-151"/>
</dbReference>
<dbReference type="PDB" id="5OA3">
    <property type="method" value="EM"/>
    <property type="resolution" value="4.30 A"/>
    <property type="chains" value="N=1-151"/>
</dbReference>
<dbReference type="PDB" id="5T2C">
    <property type="method" value="EM"/>
    <property type="resolution" value="3.60 A"/>
    <property type="chains" value="AN=1-151"/>
</dbReference>
<dbReference type="PDB" id="5VYC">
    <property type="method" value="X-ray"/>
    <property type="resolution" value="6.00 A"/>
    <property type="chains" value="N1/N2/N3/N4/N5/N6=1-151"/>
</dbReference>
<dbReference type="PDB" id="6FEC">
    <property type="method" value="EM"/>
    <property type="resolution" value="6.30 A"/>
    <property type="chains" value="Z=2-151"/>
</dbReference>
<dbReference type="PDB" id="6G18">
    <property type="method" value="EM"/>
    <property type="resolution" value="3.60 A"/>
    <property type="chains" value="N=1-151"/>
</dbReference>
<dbReference type="PDB" id="6G4S">
    <property type="method" value="EM"/>
    <property type="resolution" value="4.00 A"/>
    <property type="chains" value="N=1-151"/>
</dbReference>
<dbReference type="PDB" id="6G4W">
    <property type="method" value="EM"/>
    <property type="resolution" value="4.50 A"/>
    <property type="chains" value="N=1-151"/>
</dbReference>
<dbReference type="PDB" id="6G51">
    <property type="method" value="EM"/>
    <property type="resolution" value="4.10 A"/>
    <property type="chains" value="N=1-151"/>
</dbReference>
<dbReference type="PDB" id="6G53">
    <property type="method" value="EM"/>
    <property type="resolution" value="4.50 A"/>
    <property type="chains" value="N=1-151"/>
</dbReference>
<dbReference type="PDB" id="6G5H">
    <property type="method" value="EM"/>
    <property type="resolution" value="3.60 A"/>
    <property type="chains" value="N=1-151"/>
</dbReference>
<dbReference type="PDB" id="6G5I">
    <property type="method" value="EM"/>
    <property type="resolution" value="3.50 A"/>
    <property type="chains" value="N=1-151"/>
</dbReference>
<dbReference type="PDB" id="6IP5">
    <property type="method" value="EM"/>
    <property type="resolution" value="3.90 A"/>
    <property type="chains" value="3K=1-151"/>
</dbReference>
<dbReference type="PDB" id="6IP6">
    <property type="method" value="EM"/>
    <property type="resolution" value="4.50 A"/>
    <property type="chains" value="3K=1-151"/>
</dbReference>
<dbReference type="PDB" id="6IP8">
    <property type="method" value="EM"/>
    <property type="resolution" value="3.90 A"/>
    <property type="chains" value="3K=1-151"/>
</dbReference>
<dbReference type="PDB" id="6OLE">
    <property type="method" value="EM"/>
    <property type="resolution" value="3.10 A"/>
    <property type="chains" value="SN=2-151"/>
</dbReference>
<dbReference type="PDB" id="6OLF">
    <property type="method" value="EM"/>
    <property type="resolution" value="3.90 A"/>
    <property type="chains" value="SN=2-151"/>
</dbReference>
<dbReference type="PDB" id="6OLG">
    <property type="method" value="EM"/>
    <property type="resolution" value="3.40 A"/>
    <property type="chains" value="BN=2-150"/>
</dbReference>
<dbReference type="PDB" id="6OLI">
    <property type="method" value="EM"/>
    <property type="resolution" value="3.50 A"/>
    <property type="chains" value="SN=2-151"/>
</dbReference>
<dbReference type="PDB" id="6OLZ">
    <property type="method" value="EM"/>
    <property type="resolution" value="3.90 A"/>
    <property type="chains" value="BN=2-150"/>
</dbReference>
<dbReference type="PDB" id="6OM0">
    <property type="method" value="EM"/>
    <property type="resolution" value="3.10 A"/>
    <property type="chains" value="SN=2-151"/>
</dbReference>
<dbReference type="PDB" id="6OM7">
    <property type="method" value="EM"/>
    <property type="resolution" value="3.70 A"/>
    <property type="chains" value="SN=2-151"/>
</dbReference>
<dbReference type="PDB" id="6QZP">
    <property type="method" value="EM"/>
    <property type="resolution" value="2.90 A"/>
    <property type="chains" value="SN=2-151"/>
</dbReference>
<dbReference type="PDB" id="6XA1">
    <property type="method" value="EM"/>
    <property type="resolution" value="2.80 A"/>
    <property type="chains" value="SN=2-151"/>
</dbReference>
<dbReference type="PDB" id="6Y0G">
    <property type="method" value="EM"/>
    <property type="resolution" value="3.20 A"/>
    <property type="chains" value="SN=1-151"/>
</dbReference>
<dbReference type="PDB" id="6Y2L">
    <property type="method" value="EM"/>
    <property type="resolution" value="3.00 A"/>
    <property type="chains" value="SN=1-151"/>
</dbReference>
<dbReference type="PDB" id="6Y57">
    <property type="method" value="EM"/>
    <property type="resolution" value="3.50 A"/>
    <property type="chains" value="SN=1-151"/>
</dbReference>
<dbReference type="PDB" id="6YBD">
    <property type="method" value="EM"/>
    <property type="resolution" value="3.30 A"/>
    <property type="chains" value="I=1-151"/>
</dbReference>
<dbReference type="PDB" id="6YBW">
    <property type="method" value="EM"/>
    <property type="resolution" value="3.10 A"/>
    <property type="chains" value="I=1-151"/>
</dbReference>
<dbReference type="PDB" id="6Z6L">
    <property type="method" value="EM"/>
    <property type="resolution" value="3.00 A"/>
    <property type="chains" value="SN=1-151"/>
</dbReference>
<dbReference type="PDB" id="6Z6M">
    <property type="method" value="EM"/>
    <property type="resolution" value="3.10 A"/>
    <property type="chains" value="SN=1-151"/>
</dbReference>
<dbReference type="PDB" id="6Z6N">
    <property type="method" value="EM"/>
    <property type="resolution" value="2.90 A"/>
    <property type="chains" value="SN=1-151"/>
</dbReference>
<dbReference type="PDB" id="6ZLW">
    <property type="method" value="EM"/>
    <property type="resolution" value="2.60 A"/>
    <property type="chains" value="N=1-151"/>
</dbReference>
<dbReference type="PDB" id="6ZM7">
    <property type="method" value="EM"/>
    <property type="resolution" value="2.70 A"/>
    <property type="chains" value="SN=1-151"/>
</dbReference>
<dbReference type="PDB" id="6ZME">
    <property type="method" value="EM"/>
    <property type="resolution" value="3.00 A"/>
    <property type="chains" value="SN=1-151"/>
</dbReference>
<dbReference type="PDB" id="6ZMI">
    <property type="method" value="EM"/>
    <property type="resolution" value="2.60 A"/>
    <property type="chains" value="SN=1-151"/>
</dbReference>
<dbReference type="PDB" id="6ZMO">
    <property type="method" value="EM"/>
    <property type="resolution" value="3.10 A"/>
    <property type="chains" value="SN=1-151"/>
</dbReference>
<dbReference type="PDB" id="6ZMT">
    <property type="method" value="EM"/>
    <property type="resolution" value="3.00 A"/>
    <property type="chains" value="N=1-151"/>
</dbReference>
<dbReference type="PDB" id="6ZMW">
    <property type="method" value="EM"/>
    <property type="resolution" value="3.70 A"/>
    <property type="chains" value="I=1-151"/>
</dbReference>
<dbReference type="PDB" id="6ZN5">
    <property type="method" value="EM"/>
    <property type="resolution" value="3.20 A"/>
    <property type="chains" value="N=2-150"/>
</dbReference>
<dbReference type="PDB" id="6ZOJ">
    <property type="method" value="EM"/>
    <property type="resolution" value="2.80 A"/>
    <property type="chains" value="N=1-151"/>
</dbReference>
<dbReference type="PDB" id="6ZOK">
    <property type="method" value="EM"/>
    <property type="resolution" value="2.80 A"/>
    <property type="chains" value="N=1-151"/>
</dbReference>
<dbReference type="PDB" id="6ZON">
    <property type="method" value="EM"/>
    <property type="resolution" value="3.00 A"/>
    <property type="chains" value="m=1-151"/>
</dbReference>
<dbReference type="PDB" id="6ZP4">
    <property type="method" value="EM"/>
    <property type="resolution" value="2.90 A"/>
    <property type="chains" value="m=1-151"/>
</dbReference>
<dbReference type="PDB" id="6ZUO">
    <property type="method" value="EM"/>
    <property type="resolution" value="3.10 A"/>
    <property type="chains" value="N=1-151"/>
</dbReference>
<dbReference type="PDB" id="6ZV6">
    <property type="method" value="EM"/>
    <property type="resolution" value="2.90 A"/>
    <property type="chains" value="N=1-151"/>
</dbReference>
<dbReference type="PDB" id="6ZVH">
    <property type="method" value="EM"/>
    <property type="resolution" value="2.90 A"/>
    <property type="chains" value="N=2-151"/>
</dbReference>
<dbReference type="PDB" id="6ZVJ">
    <property type="method" value="EM"/>
    <property type="resolution" value="3.80 A"/>
    <property type="chains" value="m=2-150"/>
</dbReference>
<dbReference type="PDB" id="6ZXD">
    <property type="method" value="EM"/>
    <property type="resolution" value="3.20 A"/>
    <property type="chains" value="N=1-151"/>
</dbReference>
<dbReference type="PDB" id="6ZXE">
    <property type="method" value="EM"/>
    <property type="resolution" value="3.00 A"/>
    <property type="chains" value="N=1-151"/>
</dbReference>
<dbReference type="PDB" id="6ZXF">
    <property type="method" value="EM"/>
    <property type="resolution" value="3.70 A"/>
    <property type="chains" value="N=1-151"/>
</dbReference>
<dbReference type="PDB" id="6ZXG">
    <property type="method" value="EM"/>
    <property type="resolution" value="2.60 A"/>
    <property type="chains" value="N=1-151"/>
</dbReference>
<dbReference type="PDB" id="6ZXH">
    <property type="method" value="EM"/>
    <property type="resolution" value="2.70 A"/>
    <property type="chains" value="N=1-151"/>
</dbReference>
<dbReference type="PDB" id="7A09">
    <property type="method" value="EM"/>
    <property type="resolution" value="3.50 A"/>
    <property type="chains" value="m=1-151"/>
</dbReference>
<dbReference type="PDB" id="7JQB">
    <property type="method" value="EM"/>
    <property type="resolution" value="2.70 A"/>
    <property type="chains" value="P=1-151"/>
</dbReference>
<dbReference type="PDB" id="7JQC">
    <property type="method" value="EM"/>
    <property type="resolution" value="3.30 A"/>
    <property type="chains" value="P=1-151"/>
</dbReference>
<dbReference type="PDB" id="7K5I">
    <property type="method" value="EM"/>
    <property type="resolution" value="2.90 A"/>
    <property type="chains" value="N=1-151"/>
</dbReference>
<dbReference type="PDB" id="7MQ8">
    <property type="method" value="EM"/>
    <property type="resolution" value="3.60 A"/>
    <property type="chains" value="NF=1-151"/>
</dbReference>
<dbReference type="PDB" id="7MQ9">
    <property type="method" value="EM"/>
    <property type="resolution" value="3.87 A"/>
    <property type="chains" value="NF=1-151"/>
</dbReference>
<dbReference type="PDB" id="7MQA">
    <property type="method" value="EM"/>
    <property type="resolution" value="2.70 A"/>
    <property type="chains" value="NF=1-151"/>
</dbReference>
<dbReference type="PDB" id="7QP6">
    <property type="method" value="EM"/>
    <property type="resolution" value="4.70 A"/>
    <property type="chains" value="I=1-151"/>
</dbReference>
<dbReference type="PDB" id="7QP7">
    <property type="method" value="EM"/>
    <property type="resolution" value="3.70 A"/>
    <property type="chains" value="I=1-151"/>
</dbReference>
<dbReference type="PDB" id="7R4X">
    <property type="method" value="EM"/>
    <property type="resolution" value="2.15 A"/>
    <property type="chains" value="N=1-151"/>
</dbReference>
<dbReference type="PDB" id="7TQL">
    <property type="method" value="EM"/>
    <property type="resolution" value="3.40 A"/>
    <property type="chains" value="N=2-142"/>
</dbReference>
<dbReference type="PDB" id="7WTS">
    <property type="method" value="EM"/>
    <property type="resolution" value="3.20 A"/>
    <property type="chains" value="N=1-151"/>
</dbReference>
<dbReference type="PDB" id="7WTT">
    <property type="method" value="EM"/>
    <property type="resolution" value="3.10 A"/>
    <property type="chains" value="N=1-151"/>
</dbReference>
<dbReference type="PDB" id="7WTU">
    <property type="method" value="EM"/>
    <property type="resolution" value="3.00 A"/>
    <property type="chains" value="N=1-151"/>
</dbReference>
<dbReference type="PDB" id="7WTV">
    <property type="method" value="EM"/>
    <property type="resolution" value="3.50 A"/>
    <property type="chains" value="N=1-151"/>
</dbReference>
<dbReference type="PDB" id="7WTW">
    <property type="method" value="EM"/>
    <property type="resolution" value="3.20 A"/>
    <property type="chains" value="N=1-151"/>
</dbReference>
<dbReference type="PDB" id="7WTX">
    <property type="method" value="EM"/>
    <property type="resolution" value="3.10 A"/>
    <property type="chains" value="N=1-151"/>
</dbReference>
<dbReference type="PDB" id="7WTZ">
    <property type="method" value="EM"/>
    <property type="resolution" value="3.00 A"/>
    <property type="chains" value="N=1-151"/>
</dbReference>
<dbReference type="PDB" id="7WU0">
    <property type="method" value="EM"/>
    <property type="resolution" value="3.30 A"/>
    <property type="chains" value="N=1-151"/>
</dbReference>
<dbReference type="PDB" id="7XNX">
    <property type="method" value="EM"/>
    <property type="resolution" value="2.70 A"/>
    <property type="chains" value="SN=1-151"/>
</dbReference>
<dbReference type="PDB" id="7XNY">
    <property type="method" value="EM"/>
    <property type="resolution" value="2.50 A"/>
    <property type="chains" value="SN=1-151"/>
</dbReference>
<dbReference type="PDB" id="8G5Y">
    <property type="method" value="EM"/>
    <property type="resolution" value="2.29 A"/>
    <property type="chains" value="SN=1-151"/>
</dbReference>
<dbReference type="PDB" id="8G5Z">
    <property type="method" value="EM"/>
    <property type="resolution" value="2.64 A"/>
    <property type="chains" value="SN=2-151"/>
</dbReference>
<dbReference type="PDB" id="8G60">
    <property type="method" value="EM"/>
    <property type="resolution" value="2.54 A"/>
    <property type="chains" value="SN=1-151"/>
</dbReference>
<dbReference type="PDB" id="8G61">
    <property type="method" value="EM"/>
    <property type="resolution" value="2.94 A"/>
    <property type="chains" value="SN=1-151"/>
</dbReference>
<dbReference type="PDB" id="8G6J">
    <property type="method" value="EM"/>
    <property type="resolution" value="2.80 A"/>
    <property type="chains" value="SN=1-151"/>
</dbReference>
<dbReference type="PDB" id="8GLP">
    <property type="method" value="EM"/>
    <property type="resolution" value="1.67 A"/>
    <property type="chains" value="SN=1-151"/>
</dbReference>
<dbReference type="PDB" id="8IFD">
    <property type="method" value="EM"/>
    <property type="resolution" value="2.59 A"/>
    <property type="chains" value="3K=1-151"/>
</dbReference>
<dbReference type="PDB" id="8IFE">
    <property type="method" value="EM"/>
    <property type="resolution" value="2.57 A"/>
    <property type="chains" value="3K=1-151"/>
</dbReference>
<dbReference type="PDB" id="8JDJ">
    <property type="method" value="EM"/>
    <property type="resolution" value="2.50 A"/>
    <property type="chains" value="9=1-151"/>
</dbReference>
<dbReference type="PDB" id="8JDK">
    <property type="method" value="EM"/>
    <property type="resolution" value="2.26 A"/>
    <property type="chains" value="9=1-151"/>
</dbReference>
<dbReference type="PDB" id="8JDL">
    <property type="method" value="EM"/>
    <property type="resolution" value="2.42 A"/>
    <property type="chains" value="9=1-151"/>
</dbReference>
<dbReference type="PDB" id="8JDM">
    <property type="method" value="EM"/>
    <property type="resolution" value="2.67 A"/>
    <property type="chains" value="9=1-151"/>
</dbReference>
<dbReference type="PDB" id="8K2C">
    <property type="method" value="EM"/>
    <property type="resolution" value="2.40 A"/>
    <property type="chains" value="SN=1-151"/>
</dbReference>
<dbReference type="PDB" id="8OZ0">
    <property type="method" value="EM"/>
    <property type="resolution" value="3.50 A"/>
    <property type="chains" value="V=1-151"/>
</dbReference>
<dbReference type="PDB" id="8PJ1">
    <property type="method" value="EM"/>
    <property type="resolution" value="3.40 A"/>
    <property type="chains" value="I=1-151"/>
</dbReference>
<dbReference type="PDB" id="8PJ2">
    <property type="method" value="EM"/>
    <property type="resolution" value="3.40 A"/>
    <property type="chains" value="I=1-151"/>
</dbReference>
<dbReference type="PDB" id="8PJ3">
    <property type="method" value="EM"/>
    <property type="resolution" value="3.70 A"/>
    <property type="chains" value="I=1-151"/>
</dbReference>
<dbReference type="PDB" id="8PJ4">
    <property type="method" value="EM"/>
    <property type="resolution" value="3.20 A"/>
    <property type="chains" value="I=1-151"/>
</dbReference>
<dbReference type="PDB" id="8PJ5">
    <property type="method" value="EM"/>
    <property type="resolution" value="2.90 A"/>
    <property type="chains" value="I=1-151"/>
</dbReference>
<dbReference type="PDB" id="8PJ6">
    <property type="method" value="EM"/>
    <property type="resolution" value="2.90 A"/>
    <property type="chains" value="I=1-151"/>
</dbReference>
<dbReference type="PDB" id="8PPK">
    <property type="method" value="EM"/>
    <property type="resolution" value="2.98 A"/>
    <property type="chains" value="N=1-151"/>
</dbReference>
<dbReference type="PDB" id="8PPL">
    <property type="method" value="EM"/>
    <property type="resolution" value="2.65 A"/>
    <property type="chains" value="AN=1-151"/>
</dbReference>
<dbReference type="PDB" id="8QOI">
    <property type="method" value="EM"/>
    <property type="resolution" value="1.90 A"/>
    <property type="chains" value="SN=1-151"/>
</dbReference>
<dbReference type="PDB" id="8RG0">
    <property type="method" value="EM"/>
    <property type="resolution" value="3.40 A"/>
    <property type="chains" value="I=1-151"/>
</dbReference>
<dbReference type="PDB" id="8T4S">
    <property type="method" value="EM"/>
    <property type="resolution" value="2.60 A"/>
    <property type="chains" value="N=1-151"/>
</dbReference>
<dbReference type="PDB" id="8UKB">
    <property type="method" value="EM"/>
    <property type="resolution" value="3.05 A"/>
    <property type="chains" value="SN=2-151"/>
</dbReference>
<dbReference type="PDB" id="8XP2">
    <property type="method" value="EM"/>
    <property type="resolution" value="3.20 A"/>
    <property type="chains" value="SN=1-151"/>
</dbReference>
<dbReference type="PDB" id="8XP3">
    <property type="method" value="EM"/>
    <property type="resolution" value="3.40 A"/>
    <property type="chains" value="SN=1-151"/>
</dbReference>
<dbReference type="PDB" id="8XSX">
    <property type="method" value="EM"/>
    <property type="resolution" value="2.40 A"/>
    <property type="chains" value="SN=1-151"/>
</dbReference>
<dbReference type="PDB" id="8XSY">
    <property type="method" value="EM"/>
    <property type="resolution" value="3.00 A"/>
    <property type="chains" value="SN=1-151"/>
</dbReference>
<dbReference type="PDB" id="8XSZ">
    <property type="method" value="EM"/>
    <property type="resolution" value="3.20 A"/>
    <property type="chains" value="SN=1-151"/>
</dbReference>
<dbReference type="PDB" id="8XXL">
    <property type="method" value="EM"/>
    <property type="resolution" value="2.90 A"/>
    <property type="chains" value="SN=1-151"/>
</dbReference>
<dbReference type="PDB" id="8XXM">
    <property type="method" value="EM"/>
    <property type="resolution" value="3.20 A"/>
    <property type="chains" value="SN=1-151"/>
</dbReference>
<dbReference type="PDB" id="8XXN">
    <property type="method" value="EM"/>
    <property type="resolution" value="3.60 A"/>
    <property type="chains" value="SN=1-151"/>
</dbReference>
<dbReference type="PDB" id="8Y0W">
    <property type="method" value="EM"/>
    <property type="resolution" value="3.40 A"/>
    <property type="chains" value="SN=1-151"/>
</dbReference>
<dbReference type="PDB" id="8Y0X">
    <property type="method" value="EM"/>
    <property type="resolution" value="3.30 A"/>
    <property type="chains" value="SN=1-151"/>
</dbReference>
<dbReference type="PDB" id="8YOO">
    <property type="method" value="EM"/>
    <property type="resolution" value="2.00 A"/>
    <property type="chains" value="SN=1-151"/>
</dbReference>
<dbReference type="PDB" id="8YOP">
    <property type="method" value="EM"/>
    <property type="resolution" value="2.20 A"/>
    <property type="chains" value="SN=1-151"/>
</dbReference>
<dbReference type="PDB" id="8ZDB">
    <property type="method" value="EM"/>
    <property type="resolution" value="3.60 A"/>
    <property type="chains" value="N=1-151"/>
</dbReference>
<dbReference type="PDB" id="8ZDC">
    <property type="method" value="EM"/>
    <property type="resolution" value="3.80 A"/>
    <property type="chains" value="N=1-151"/>
</dbReference>
<dbReference type="PDB" id="8ZDD">
    <property type="method" value="EM"/>
    <property type="resolution" value="3.70 A"/>
    <property type="chains" value="N=1-151"/>
</dbReference>
<dbReference type="PDB" id="9BKD">
    <property type="method" value="EM"/>
    <property type="resolution" value="2.60 A"/>
    <property type="chains" value="I=1-151"/>
</dbReference>
<dbReference type="PDB" id="9BLN">
    <property type="method" value="EM"/>
    <property type="resolution" value="3.90 A"/>
    <property type="chains" value="I=1-151"/>
</dbReference>
<dbReference type="PDB" id="9C3H">
    <property type="method" value="EM"/>
    <property type="resolution" value="2.00 A"/>
    <property type="chains" value="SN=1-151"/>
</dbReference>
<dbReference type="PDB" id="9G8M">
    <property type="method" value="EM"/>
    <property type="resolution" value="3.30 A"/>
    <property type="chains" value="SN=1-151"/>
</dbReference>
<dbReference type="PDB" id="9G8O">
    <property type="method" value="EM"/>
    <property type="resolution" value="3.40 A"/>
    <property type="chains" value="SN=1-151"/>
</dbReference>
<dbReference type="PDBsum" id="4UG0"/>
<dbReference type="PDBsum" id="4V6X"/>
<dbReference type="PDBsum" id="5A2Q"/>
<dbReference type="PDBsum" id="5AJ0"/>
<dbReference type="PDBsum" id="5FLX"/>
<dbReference type="PDBsum" id="5LKS"/>
<dbReference type="PDBsum" id="5OA3"/>
<dbReference type="PDBsum" id="5T2C"/>
<dbReference type="PDBsum" id="5VYC"/>
<dbReference type="PDBsum" id="6FEC"/>
<dbReference type="PDBsum" id="6G18"/>
<dbReference type="PDBsum" id="6G4S"/>
<dbReference type="PDBsum" id="6G4W"/>
<dbReference type="PDBsum" id="6G51"/>
<dbReference type="PDBsum" id="6G53"/>
<dbReference type="PDBsum" id="6G5H"/>
<dbReference type="PDBsum" id="6G5I"/>
<dbReference type="PDBsum" id="6IP5"/>
<dbReference type="PDBsum" id="6IP6"/>
<dbReference type="PDBsum" id="6IP8"/>
<dbReference type="PDBsum" id="6OLE"/>
<dbReference type="PDBsum" id="6OLF"/>
<dbReference type="PDBsum" id="6OLG"/>
<dbReference type="PDBsum" id="6OLI"/>
<dbReference type="PDBsum" id="6OLZ"/>
<dbReference type="PDBsum" id="6OM0"/>
<dbReference type="PDBsum" id="6OM7"/>
<dbReference type="PDBsum" id="6QZP"/>
<dbReference type="PDBsum" id="6XA1"/>
<dbReference type="PDBsum" id="6Y0G"/>
<dbReference type="PDBsum" id="6Y2L"/>
<dbReference type="PDBsum" id="6Y57"/>
<dbReference type="PDBsum" id="6YBD"/>
<dbReference type="PDBsum" id="6YBW"/>
<dbReference type="PDBsum" id="6Z6L"/>
<dbReference type="PDBsum" id="6Z6M"/>
<dbReference type="PDBsum" id="6Z6N"/>
<dbReference type="PDBsum" id="6ZLW"/>
<dbReference type="PDBsum" id="6ZM7"/>
<dbReference type="PDBsum" id="6ZME"/>
<dbReference type="PDBsum" id="6ZMI"/>
<dbReference type="PDBsum" id="6ZMO"/>
<dbReference type="PDBsum" id="6ZMT"/>
<dbReference type="PDBsum" id="6ZMW"/>
<dbReference type="PDBsum" id="6ZN5"/>
<dbReference type="PDBsum" id="6ZOJ"/>
<dbReference type="PDBsum" id="6ZOK"/>
<dbReference type="PDBsum" id="6ZON"/>
<dbReference type="PDBsum" id="6ZP4"/>
<dbReference type="PDBsum" id="6ZUO"/>
<dbReference type="PDBsum" id="6ZV6"/>
<dbReference type="PDBsum" id="6ZVH"/>
<dbReference type="PDBsum" id="6ZVJ"/>
<dbReference type="PDBsum" id="6ZXD"/>
<dbReference type="PDBsum" id="6ZXE"/>
<dbReference type="PDBsum" id="6ZXF"/>
<dbReference type="PDBsum" id="6ZXG"/>
<dbReference type="PDBsum" id="6ZXH"/>
<dbReference type="PDBsum" id="7A09"/>
<dbReference type="PDBsum" id="7JQB"/>
<dbReference type="PDBsum" id="7JQC"/>
<dbReference type="PDBsum" id="7K5I"/>
<dbReference type="PDBsum" id="7MQ8"/>
<dbReference type="PDBsum" id="7MQ9"/>
<dbReference type="PDBsum" id="7MQA"/>
<dbReference type="PDBsum" id="7QP6"/>
<dbReference type="PDBsum" id="7QP7"/>
<dbReference type="PDBsum" id="7R4X"/>
<dbReference type="PDBsum" id="7TQL"/>
<dbReference type="PDBsum" id="7WTS"/>
<dbReference type="PDBsum" id="7WTT"/>
<dbReference type="PDBsum" id="7WTU"/>
<dbReference type="PDBsum" id="7WTV"/>
<dbReference type="PDBsum" id="7WTW"/>
<dbReference type="PDBsum" id="7WTX"/>
<dbReference type="PDBsum" id="7WTZ"/>
<dbReference type="PDBsum" id="7WU0"/>
<dbReference type="PDBsum" id="7XNX"/>
<dbReference type="PDBsum" id="7XNY"/>
<dbReference type="PDBsum" id="8G5Y"/>
<dbReference type="PDBsum" id="8G5Z"/>
<dbReference type="PDBsum" id="8G60"/>
<dbReference type="PDBsum" id="8G61"/>
<dbReference type="PDBsum" id="8G6J"/>
<dbReference type="PDBsum" id="8GLP"/>
<dbReference type="PDBsum" id="8IFD"/>
<dbReference type="PDBsum" id="8IFE"/>
<dbReference type="PDBsum" id="8JDJ"/>
<dbReference type="PDBsum" id="8JDK"/>
<dbReference type="PDBsum" id="8JDL"/>
<dbReference type="PDBsum" id="8JDM"/>
<dbReference type="PDBsum" id="8K2C"/>
<dbReference type="PDBsum" id="8OZ0"/>
<dbReference type="PDBsum" id="8PJ1"/>
<dbReference type="PDBsum" id="8PJ2"/>
<dbReference type="PDBsum" id="8PJ3"/>
<dbReference type="PDBsum" id="8PJ4"/>
<dbReference type="PDBsum" id="8PJ5"/>
<dbReference type="PDBsum" id="8PJ6"/>
<dbReference type="PDBsum" id="8PPK"/>
<dbReference type="PDBsum" id="8PPL"/>
<dbReference type="PDBsum" id="8QOI"/>
<dbReference type="PDBsum" id="8RG0"/>
<dbReference type="PDBsum" id="8T4S"/>
<dbReference type="PDBsum" id="8UKB"/>
<dbReference type="PDBsum" id="8XP2"/>
<dbReference type="PDBsum" id="8XP3"/>
<dbReference type="PDBsum" id="8XSX"/>
<dbReference type="PDBsum" id="8XSY"/>
<dbReference type="PDBsum" id="8XSZ"/>
<dbReference type="PDBsum" id="8XXL"/>
<dbReference type="PDBsum" id="8XXM"/>
<dbReference type="PDBsum" id="8XXN"/>
<dbReference type="PDBsum" id="8Y0W"/>
<dbReference type="PDBsum" id="8Y0X"/>
<dbReference type="PDBsum" id="8YOO"/>
<dbReference type="PDBsum" id="8YOP"/>
<dbReference type="PDBsum" id="8ZDB"/>
<dbReference type="PDBsum" id="8ZDC"/>
<dbReference type="PDBsum" id="8ZDD"/>
<dbReference type="PDBsum" id="9BKD"/>
<dbReference type="PDBsum" id="9BLN"/>
<dbReference type="PDBsum" id="9C3H"/>
<dbReference type="PDBsum" id="9G8M"/>
<dbReference type="PDBsum" id="9G8O"/>
<dbReference type="EMDB" id="EMD-10668"/>
<dbReference type="EMDB" id="EMD-10674"/>
<dbReference type="EMDB" id="EMD-10690"/>
<dbReference type="EMDB" id="EMD-10769"/>
<dbReference type="EMDB" id="EMD-10775"/>
<dbReference type="EMDB" id="EMD-11098"/>
<dbReference type="EMDB" id="EMD-11099"/>
<dbReference type="EMDB" id="EMD-11100"/>
<dbReference type="EMDB" id="EMD-11276"/>
<dbReference type="EMDB" id="EMD-11288"/>
<dbReference type="EMDB" id="EMD-11289"/>
<dbReference type="EMDB" id="EMD-11292"/>
<dbReference type="EMDB" id="EMD-11299"/>
<dbReference type="EMDB" id="EMD-11301"/>
<dbReference type="EMDB" id="EMD-11302"/>
<dbReference type="EMDB" id="EMD-11310"/>
<dbReference type="EMDB" id="EMD-11320"/>
<dbReference type="EMDB" id="EMD-11321"/>
<dbReference type="EMDB" id="EMD-11325"/>
<dbReference type="EMDB" id="EMD-11335"/>
<dbReference type="EMDB" id="EMD-11440"/>
<dbReference type="EMDB" id="EMD-11441"/>
<dbReference type="EMDB" id="EMD-11456"/>
<dbReference type="EMDB" id="EMD-11458"/>
<dbReference type="EMDB" id="EMD-11517"/>
<dbReference type="EMDB" id="EMD-11518"/>
<dbReference type="EMDB" id="EMD-11519"/>
<dbReference type="EMDB" id="EMD-11520"/>
<dbReference type="EMDB" id="EMD-11521"/>
<dbReference type="EMDB" id="EMD-11602"/>
<dbReference type="EMDB" id="EMD-14113"/>
<dbReference type="EMDB" id="EMD-14114"/>
<dbReference type="EMDB" id="EMD-14317"/>
<dbReference type="EMDB" id="EMD-17297"/>
<dbReference type="EMDB" id="EMD-17696"/>
<dbReference type="EMDB" id="EMD-17697"/>
<dbReference type="EMDB" id="EMD-17698"/>
<dbReference type="EMDB" id="EMD-17699"/>
<dbReference type="EMDB" id="EMD-17700"/>
<dbReference type="EMDB" id="EMD-17701"/>
<dbReference type="EMDB" id="EMD-17804"/>
<dbReference type="EMDB" id="EMD-17805"/>
<dbReference type="EMDB" id="EMD-18539"/>
<dbReference type="EMDB" id="EMD-19128"/>
<dbReference type="EMDB" id="EMD-22681"/>
<dbReference type="EMDB" id="EMD-23936"/>
<dbReference type="EMDB" id="EMD-23937"/>
<dbReference type="EMDB" id="EMD-23938"/>
<dbReference type="EMDB" id="EMD-26067"/>
<dbReference type="EMDB" id="EMD-29757"/>
<dbReference type="EMDB" id="EMD-29758"/>
<dbReference type="EMDB" id="EMD-29759"/>
<dbReference type="EMDB" id="EMD-29760"/>
<dbReference type="EMDB" id="EMD-29771"/>
<dbReference type="EMDB" id="EMD-32799"/>
<dbReference type="EMDB" id="EMD-32800"/>
<dbReference type="EMDB" id="EMD-32801"/>
<dbReference type="EMDB" id="EMD-32802"/>
<dbReference type="EMDB" id="EMD-32803"/>
<dbReference type="EMDB" id="EMD-32804"/>
<dbReference type="EMDB" id="EMD-32806"/>
<dbReference type="EMDB" id="EMD-32807"/>
<dbReference type="EMDB" id="EMD-33329"/>
<dbReference type="EMDB" id="EMD-33330"/>
<dbReference type="EMDB" id="EMD-35413"/>
<dbReference type="EMDB" id="EMD-35414"/>
<dbReference type="EMDB" id="EMD-36178"/>
<dbReference type="EMDB" id="EMD-36179"/>
<dbReference type="EMDB" id="EMD-36180"/>
<dbReference type="EMDB" id="EMD-36181"/>
<dbReference type="EMDB" id="EMD-36838"/>
<dbReference type="EMDB" id="EMD-3770"/>
<dbReference type="EMDB" id="EMD-38548"/>
<dbReference type="EMDB" id="EMD-38549"/>
<dbReference type="EMDB" id="EMD-38629"/>
<dbReference type="EMDB" id="EMD-38630"/>
<dbReference type="EMDB" id="EMD-38631"/>
<dbReference type="EMDB" id="EMD-38752"/>
<dbReference type="EMDB" id="EMD-38753"/>
<dbReference type="EMDB" id="EMD-38754"/>
<dbReference type="EMDB" id="EMD-3883"/>
<dbReference type="EMDB" id="EMD-39455"/>
<dbReference type="EMDB" id="EMD-39456"/>
<dbReference type="EMDB" id="EMD-39956"/>
<dbReference type="EMDB" id="EMD-39957"/>
<dbReference type="EMDB" id="EMD-39958"/>
<dbReference type="EMDB" id="EMD-40205"/>
<dbReference type="EMDB" id="EMD-4070"/>
<dbReference type="EMDB" id="EMD-41039"/>
<dbReference type="EMDB" id="EMD-42351"/>
<dbReference type="EMDB" id="EMD-4242"/>
<dbReference type="EMDB" id="EMD-4337"/>
<dbReference type="EMDB" id="EMD-4348"/>
<dbReference type="EMDB" id="EMD-4349"/>
<dbReference type="EMDB" id="EMD-4350"/>
<dbReference type="EMDB" id="EMD-4351"/>
<dbReference type="EMDB" id="EMD-4352"/>
<dbReference type="EMDB" id="EMD-4353"/>
<dbReference type="EMDB" id="EMD-44641"/>
<dbReference type="EMDB" id="EMD-44671"/>
<dbReference type="EMDB" id="EMD-45170"/>
<dbReference type="EMDB" id="EMD-51132"/>
<dbReference type="EMDB" id="EMD-51134"/>
<dbReference type="EMDB" id="EMD-9701"/>
<dbReference type="EMDB" id="EMD-9702"/>
<dbReference type="EMDB" id="EMD-9703"/>
<dbReference type="SMR" id="P62277"/>
<dbReference type="BioGRID" id="112121">
    <property type="interactions" value="500"/>
</dbReference>
<dbReference type="ComplexPortal" id="CPX-5223">
    <property type="entry name" value="40S cytosolic small ribosomal subunit"/>
</dbReference>
<dbReference type="CORUM" id="P62277"/>
<dbReference type="FunCoup" id="P62277">
    <property type="interactions" value="2055"/>
</dbReference>
<dbReference type="IntAct" id="P62277">
    <property type="interactions" value="233"/>
</dbReference>
<dbReference type="MINT" id="P62277"/>
<dbReference type="STRING" id="9606.ENSP00000435777"/>
<dbReference type="DrugBank" id="DB11638">
    <property type="generic name" value="Artenimol"/>
</dbReference>
<dbReference type="MoonProt" id="P62277"/>
<dbReference type="GlyGen" id="P62277">
    <property type="glycosylation" value="1 site, 1 O-linked glycan (1 site)"/>
</dbReference>
<dbReference type="iPTMnet" id="P62277"/>
<dbReference type="PhosphoSitePlus" id="P62277"/>
<dbReference type="SwissPalm" id="P62277"/>
<dbReference type="BioMuta" id="RPS13"/>
<dbReference type="DMDM" id="50403608"/>
<dbReference type="jPOST" id="P62277"/>
<dbReference type="MassIVE" id="P62277"/>
<dbReference type="PaxDb" id="9606-ENSP00000435777"/>
<dbReference type="PeptideAtlas" id="P62277"/>
<dbReference type="ProteomicsDB" id="57384"/>
<dbReference type="Pumba" id="P62277"/>
<dbReference type="TopDownProteomics" id="P62277"/>
<dbReference type="Antibodypedia" id="42458">
    <property type="antibodies" value="236 antibodies from 29 providers"/>
</dbReference>
<dbReference type="DNASU" id="6207"/>
<dbReference type="Ensembl" id="ENST00000525634.6">
    <property type="protein sequence ID" value="ENSP00000435777.1"/>
    <property type="gene ID" value="ENSG00000110700.7"/>
</dbReference>
<dbReference type="GeneID" id="6207"/>
<dbReference type="KEGG" id="hsa:6207"/>
<dbReference type="MANE-Select" id="ENST00000525634.6">
    <property type="protein sequence ID" value="ENSP00000435777.1"/>
    <property type="RefSeq nucleotide sequence ID" value="NM_001017.3"/>
    <property type="RefSeq protein sequence ID" value="NP_001008.1"/>
</dbReference>
<dbReference type="UCSC" id="uc001mmp.4">
    <property type="organism name" value="human"/>
</dbReference>
<dbReference type="AGR" id="HGNC:10386"/>
<dbReference type="CTD" id="6207"/>
<dbReference type="DisGeNET" id="6207"/>
<dbReference type="GeneCards" id="RPS13"/>
<dbReference type="HGNC" id="HGNC:10386">
    <property type="gene designation" value="RPS13"/>
</dbReference>
<dbReference type="HPA" id="ENSG00000110700">
    <property type="expression patterns" value="Low tissue specificity"/>
</dbReference>
<dbReference type="MIM" id="180476">
    <property type="type" value="gene"/>
</dbReference>
<dbReference type="neXtProt" id="NX_P62277"/>
<dbReference type="OpenTargets" id="ENSG00000110700"/>
<dbReference type="PharmGKB" id="PA34785"/>
<dbReference type="VEuPathDB" id="HostDB:ENSG00000110700"/>
<dbReference type="eggNOG" id="KOG0400">
    <property type="taxonomic scope" value="Eukaryota"/>
</dbReference>
<dbReference type="GeneTree" id="ENSGT00390000017491"/>
<dbReference type="HOGENOM" id="CLU_090139_1_0_1"/>
<dbReference type="InParanoid" id="P62277"/>
<dbReference type="OMA" id="MHTRRKG"/>
<dbReference type="OrthoDB" id="623277at2759"/>
<dbReference type="PAN-GO" id="P62277">
    <property type="GO annotations" value="4 GO annotations based on evolutionary models"/>
</dbReference>
<dbReference type="PhylomeDB" id="P62277"/>
<dbReference type="TreeFam" id="TF300190"/>
<dbReference type="PathwayCommons" id="P62277"/>
<dbReference type="Reactome" id="R-HSA-156827">
    <property type="pathway name" value="L13a-mediated translational silencing of Ceruloplasmin expression"/>
</dbReference>
<dbReference type="Reactome" id="R-HSA-156902">
    <property type="pathway name" value="Peptide chain elongation"/>
</dbReference>
<dbReference type="Reactome" id="R-HSA-1799339">
    <property type="pathway name" value="SRP-dependent cotranslational protein targeting to membrane"/>
</dbReference>
<dbReference type="Reactome" id="R-HSA-192823">
    <property type="pathway name" value="Viral mRNA Translation"/>
</dbReference>
<dbReference type="Reactome" id="R-HSA-2408557">
    <property type="pathway name" value="Selenocysteine synthesis"/>
</dbReference>
<dbReference type="Reactome" id="R-HSA-6791226">
    <property type="pathway name" value="Major pathway of rRNA processing in the nucleolus and cytosol"/>
</dbReference>
<dbReference type="Reactome" id="R-HSA-72649">
    <property type="pathway name" value="Translation initiation complex formation"/>
</dbReference>
<dbReference type="Reactome" id="R-HSA-72689">
    <property type="pathway name" value="Formation of a pool of free 40S subunits"/>
</dbReference>
<dbReference type="Reactome" id="R-HSA-72695">
    <property type="pathway name" value="Formation of the ternary complex, and subsequently, the 43S complex"/>
</dbReference>
<dbReference type="Reactome" id="R-HSA-72702">
    <property type="pathway name" value="Ribosomal scanning and start codon recognition"/>
</dbReference>
<dbReference type="Reactome" id="R-HSA-72706">
    <property type="pathway name" value="GTP hydrolysis and joining of the 60S ribosomal subunit"/>
</dbReference>
<dbReference type="Reactome" id="R-HSA-72764">
    <property type="pathway name" value="Eukaryotic Translation Termination"/>
</dbReference>
<dbReference type="Reactome" id="R-HSA-9010553">
    <property type="pathway name" value="Regulation of expression of SLITs and ROBOs"/>
</dbReference>
<dbReference type="Reactome" id="R-HSA-9633012">
    <property type="pathway name" value="Response of EIF2AK4 (GCN2) to amino acid deficiency"/>
</dbReference>
<dbReference type="Reactome" id="R-HSA-9735869">
    <property type="pathway name" value="SARS-CoV-1 modulates host translation machinery"/>
</dbReference>
<dbReference type="Reactome" id="R-HSA-9754678">
    <property type="pathway name" value="SARS-CoV-2 modulates host translation machinery"/>
</dbReference>
<dbReference type="Reactome" id="R-HSA-975956">
    <property type="pathway name" value="Nonsense Mediated Decay (NMD) independent of the Exon Junction Complex (EJC)"/>
</dbReference>
<dbReference type="Reactome" id="R-HSA-975957">
    <property type="pathway name" value="Nonsense Mediated Decay (NMD) enhanced by the Exon Junction Complex (EJC)"/>
</dbReference>
<dbReference type="SignaLink" id="P62277"/>
<dbReference type="SIGNOR" id="P62277"/>
<dbReference type="BioGRID-ORCS" id="6207">
    <property type="hits" value="844 hits in 1137 CRISPR screens"/>
</dbReference>
<dbReference type="CD-CODE" id="232F8A39">
    <property type="entry name" value="P-body"/>
</dbReference>
<dbReference type="CD-CODE" id="91857CE7">
    <property type="entry name" value="Nucleolus"/>
</dbReference>
<dbReference type="CD-CODE" id="FB4E32DD">
    <property type="entry name" value="Presynaptic clusters and postsynaptic densities"/>
</dbReference>
<dbReference type="ChiTaRS" id="RPS13">
    <property type="organism name" value="human"/>
</dbReference>
<dbReference type="EvolutionaryTrace" id="P62277"/>
<dbReference type="GeneWiki" id="RPS13"/>
<dbReference type="GenomeRNAi" id="6207"/>
<dbReference type="Pharos" id="P62277">
    <property type="development level" value="Tbio"/>
</dbReference>
<dbReference type="PRO" id="PR:P62277"/>
<dbReference type="Proteomes" id="UP000005640">
    <property type="component" value="Chromosome 11"/>
</dbReference>
<dbReference type="RNAct" id="P62277">
    <property type="molecule type" value="protein"/>
</dbReference>
<dbReference type="Bgee" id="ENSG00000110700">
    <property type="expression patterns" value="Expressed in monocyte and 100 other cell types or tissues"/>
</dbReference>
<dbReference type="ExpressionAtlas" id="P62277">
    <property type="expression patterns" value="baseline and differential"/>
</dbReference>
<dbReference type="GO" id="GO:0005737">
    <property type="term" value="C:cytoplasm"/>
    <property type="evidence" value="ECO:0000303"/>
    <property type="project" value="ComplexPortal"/>
</dbReference>
<dbReference type="GO" id="GO:0005829">
    <property type="term" value="C:cytosol"/>
    <property type="evidence" value="ECO:0000304"/>
    <property type="project" value="Reactome"/>
</dbReference>
<dbReference type="GO" id="GO:0022626">
    <property type="term" value="C:cytosolic ribosome"/>
    <property type="evidence" value="ECO:0000314"/>
    <property type="project" value="FlyBase"/>
</dbReference>
<dbReference type="GO" id="GO:0022627">
    <property type="term" value="C:cytosolic small ribosomal subunit"/>
    <property type="evidence" value="ECO:0000314"/>
    <property type="project" value="UniProtKB"/>
</dbReference>
<dbReference type="GO" id="GO:0070062">
    <property type="term" value="C:extracellular exosome"/>
    <property type="evidence" value="ECO:0007005"/>
    <property type="project" value="UniProtKB"/>
</dbReference>
<dbReference type="GO" id="GO:0005925">
    <property type="term" value="C:focal adhesion"/>
    <property type="evidence" value="ECO:0007005"/>
    <property type="project" value="UniProtKB"/>
</dbReference>
<dbReference type="GO" id="GO:0016020">
    <property type="term" value="C:membrane"/>
    <property type="evidence" value="ECO:0007005"/>
    <property type="project" value="UniProtKB"/>
</dbReference>
<dbReference type="GO" id="GO:0005730">
    <property type="term" value="C:nucleolus"/>
    <property type="evidence" value="ECO:0000314"/>
    <property type="project" value="UniProtKB"/>
</dbReference>
<dbReference type="GO" id="GO:0005654">
    <property type="term" value="C:nucleoplasm"/>
    <property type="evidence" value="ECO:0000304"/>
    <property type="project" value="Reactome"/>
</dbReference>
<dbReference type="GO" id="GO:0005634">
    <property type="term" value="C:nucleus"/>
    <property type="evidence" value="ECO:0000314"/>
    <property type="project" value="UniProtKB"/>
</dbReference>
<dbReference type="GO" id="GO:0014069">
    <property type="term" value="C:postsynaptic density"/>
    <property type="evidence" value="ECO:0000314"/>
    <property type="project" value="SynGO"/>
</dbReference>
<dbReference type="GO" id="GO:0005840">
    <property type="term" value="C:ribosome"/>
    <property type="evidence" value="ECO:0000303"/>
    <property type="project" value="UniProtKB"/>
</dbReference>
<dbReference type="GO" id="GO:0032040">
    <property type="term" value="C:small-subunit processome"/>
    <property type="evidence" value="ECO:0000314"/>
    <property type="project" value="UniProtKB"/>
</dbReference>
<dbReference type="GO" id="GO:0048027">
    <property type="term" value="F:mRNA 5'-UTR binding"/>
    <property type="evidence" value="ECO:0000314"/>
    <property type="project" value="CAFA"/>
</dbReference>
<dbReference type="GO" id="GO:0003729">
    <property type="term" value="F:mRNA binding"/>
    <property type="evidence" value="ECO:0000314"/>
    <property type="project" value="UniProtKB"/>
</dbReference>
<dbReference type="GO" id="GO:0003723">
    <property type="term" value="F:RNA binding"/>
    <property type="evidence" value="ECO:0007005"/>
    <property type="project" value="UniProtKB"/>
</dbReference>
<dbReference type="GO" id="GO:0070181">
    <property type="term" value="F:small ribosomal subunit rRNA binding"/>
    <property type="evidence" value="ECO:0000318"/>
    <property type="project" value="GO_Central"/>
</dbReference>
<dbReference type="GO" id="GO:0003735">
    <property type="term" value="F:structural constituent of ribosome"/>
    <property type="evidence" value="ECO:0000314"/>
    <property type="project" value="FlyBase"/>
</dbReference>
<dbReference type="GO" id="GO:0002181">
    <property type="term" value="P:cytoplasmic translation"/>
    <property type="evidence" value="ECO:0000303"/>
    <property type="project" value="ComplexPortal"/>
</dbReference>
<dbReference type="GO" id="GO:0033119">
    <property type="term" value="P:negative regulation of RNA splicing"/>
    <property type="evidence" value="ECO:0000314"/>
    <property type="project" value="UniProtKB"/>
</dbReference>
<dbReference type="GO" id="GO:0042274">
    <property type="term" value="P:ribosomal small subunit biogenesis"/>
    <property type="evidence" value="ECO:0000314"/>
    <property type="project" value="UniProtKB"/>
</dbReference>
<dbReference type="GO" id="GO:0006412">
    <property type="term" value="P:translation"/>
    <property type="evidence" value="ECO:0000305"/>
    <property type="project" value="UniProtKB"/>
</dbReference>
<dbReference type="CDD" id="cd00353">
    <property type="entry name" value="Ribosomal_S15p_S13e"/>
    <property type="match status" value="1"/>
</dbReference>
<dbReference type="FunFam" id="1.10.287.10:FF:000003">
    <property type="entry name" value="40S ribosomal protein S13"/>
    <property type="match status" value="1"/>
</dbReference>
<dbReference type="FunFam" id="4.10.860.130:FF:000001">
    <property type="entry name" value="40S ribosomal protein S13"/>
    <property type="match status" value="1"/>
</dbReference>
<dbReference type="Gene3D" id="4.10.860.130">
    <property type="match status" value="1"/>
</dbReference>
<dbReference type="Gene3D" id="1.10.287.10">
    <property type="entry name" value="S15/NS1, RNA-binding"/>
    <property type="match status" value="1"/>
</dbReference>
<dbReference type="HAMAP" id="MF_01343_A">
    <property type="entry name" value="Ribosomal_uS15_A"/>
    <property type="match status" value="1"/>
</dbReference>
<dbReference type="InterPro" id="IPR000589">
    <property type="entry name" value="Ribosomal_uS15"/>
</dbReference>
<dbReference type="InterPro" id="IPR023029">
    <property type="entry name" value="Ribosomal_uS15_arc_euk"/>
</dbReference>
<dbReference type="InterPro" id="IPR012606">
    <property type="entry name" value="Ribosomal_uS15_N"/>
</dbReference>
<dbReference type="InterPro" id="IPR009068">
    <property type="entry name" value="uS15_NS1_RNA-bd_sf"/>
</dbReference>
<dbReference type="NCBIfam" id="NF006331">
    <property type="entry name" value="PRK08561.1"/>
    <property type="match status" value="1"/>
</dbReference>
<dbReference type="PANTHER" id="PTHR11885">
    <property type="entry name" value="RIBOSOMAL PROTEIN S15P/S13E"/>
    <property type="match status" value="1"/>
</dbReference>
<dbReference type="PANTHER" id="PTHR11885:SF6">
    <property type="entry name" value="SMALL RIBOSOMAL SUBUNIT PROTEIN US15"/>
    <property type="match status" value="1"/>
</dbReference>
<dbReference type="Pfam" id="PF08069">
    <property type="entry name" value="Ribosomal_S13_N"/>
    <property type="match status" value="1"/>
</dbReference>
<dbReference type="Pfam" id="PF00312">
    <property type="entry name" value="Ribosomal_S15"/>
    <property type="match status" value="1"/>
</dbReference>
<dbReference type="SMART" id="SM01386">
    <property type="entry name" value="Ribosomal_S13_N"/>
    <property type="match status" value="1"/>
</dbReference>
<dbReference type="SMART" id="SM01387">
    <property type="entry name" value="Ribosomal_S15"/>
    <property type="match status" value="1"/>
</dbReference>
<dbReference type="SUPFAM" id="SSF47060">
    <property type="entry name" value="S15/NS1 RNA-binding domain"/>
    <property type="match status" value="1"/>
</dbReference>
<dbReference type="PROSITE" id="PS00362">
    <property type="entry name" value="RIBOSOMAL_S15"/>
    <property type="match status" value="1"/>
</dbReference>
<reference key="1">
    <citation type="journal article" date="1993" name="Nucleic Acids Res.">
        <title>Cloning and analysis of the human S13 ribosomal protein cDNA.</title>
        <authorList>
            <person name="Chadeneau C."/>
            <person name="Lemoullac B."/>
            <person name="Denis M.G."/>
        </authorList>
    </citation>
    <scope>NUCLEOTIDE SEQUENCE [MRNA]</scope>
</reference>
<reference key="2">
    <citation type="submission" date="1994-05" db="EMBL/GenBank/DDBJ databases">
        <authorList>
            <person name="Filipenko M.L."/>
        </authorList>
    </citation>
    <scope>NUCLEOTIDE SEQUENCE [MRNA]</scope>
    <source>
        <tissue>Placenta</tissue>
    </source>
</reference>
<reference key="3">
    <citation type="journal article" date="1996" name="Biochem. Biophys. Res. Commun.">
        <title>U14 snoRNAs are encoded in introns of human ribosomal protein S13 gene.</title>
        <authorList>
            <person name="Kenmochi N."/>
            <person name="Higa S."/>
            <person name="Yoshihama M."/>
            <person name="Tanaka T."/>
        </authorList>
    </citation>
    <scope>NUCLEOTIDE SEQUENCE [GENOMIC DNA]</scope>
</reference>
<reference key="4">
    <citation type="journal article" date="2004" name="Nat. Genet.">
        <title>Complete sequencing and characterization of 21,243 full-length human cDNAs.</title>
        <authorList>
            <person name="Ota T."/>
            <person name="Suzuki Y."/>
            <person name="Nishikawa T."/>
            <person name="Otsuki T."/>
            <person name="Sugiyama T."/>
            <person name="Irie R."/>
            <person name="Wakamatsu A."/>
            <person name="Hayashi K."/>
            <person name="Sato H."/>
            <person name="Nagai K."/>
            <person name="Kimura K."/>
            <person name="Makita H."/>
            <person name="Sekine M."/>
            <person name="Obayashi M."/>
            <person name="Nishi T."/>
            <person name="Shibahara T."/>
            <person name="Tanaka T."/>
            <person name="Ishii S."/>
            <person name="Yamamoto J."/>
            <person name="Saito K."/>
            <person name="Kawai Y."/>
            <person name="Isono Y."/>
            <person name="Nakamura Y."/>
            <person name="Nagahari K."/>
            <person name="Murakami K."/>
            <person name="Yasuda T."/>
            <person name="Iwayanagi T."/>
            <person name="Wagatsuma M."/>
            <person name="Shiratori A."/>
            <person name="Sudo H."/>
            <person name="Hosoiri T."/>
            <person name="Kaku Y."/>
            <person name="Kodaira H."/>
            <person name="Kondo H."/>
            <person name="Sugawara M."/>
            <person name="Takahashi M."/>
            <person name="Kanda K."/>
            <person name="Yokoi T."/>
            <person name="Furuya T."/>
            <person name="Kikkawa E."/>
            <person name="Omura Y."/>
            <person name="Abe K."/>
            <person name="Kamihara K."/>
            <person name="Katsuta N."/>
            <person name="Sato K."/>
            <person name="Tanikawa M."/>
            <person name="Yamazaki M."/>
            <person name="Ninomiya K."/>
            <person name="Ishibashi T."/>
            <person name="Yamashita H."/>
            <person name="Murakawa K."/>
            <person name="Fujimori K."/>
            <person name="Tanai H."/>
            <person name="Kimata M."/>
            <person name="Watanabe M."/>
            <person name="Hiraoka S."/>
            <person name="Chiba Y."/>
            <person name="Ishida S."/>
            <person name="Ono Y."/>
            <person name="Takiguchi S."/>
            <person name="Watanabe S."/>
            <person name="Yosida M."/>
            <person name="Hotuta T."/>
            <person name="Kusano J."/>
            <person name="Kanehori K."/>
            <person name="Takahashi-Fujii A."/>
            <person name="Hara H."/>
            <person name="Tanase T.-O."/>
            <person name="Nomura Y."/>
            <person name="Togiya S."/>
            <person name="Komai F."/>
            <person name="Hara R."/>
            <person name="Takeuchi K."/>
            <person name="Arita M."/>
            <person name="Imose N."/>
            <person name="Musashino K."/>
            <person name="Yuuki H."/>
            <person name="Oshima A."/>
            <person name="Sasaki N."/>
            <person name="Aotsuka S."/>
            <person name="Yoshikawa Y."/>
            <person name="Matsunawa H."/>
            <person name="Ichihara T."/>
            <person name="Shiohata N."/>
            <person name="Sano S."/>
            <person name="Moriya S."/>
            <person name="Momiyama H."/>
            <person name="Satoh N."/>
            <person name="Takami S."/>
            <person name="Terashima Y."/>
            <person name="Suzuki O."/>
            <person name="Nakagawa S."/>
            <person name="Senoh A."/>
            <person name="Mizoguchi H."/>
            <person name="Goto Y."/>
            <person name="Shimizu F."/>
            <person name="Wakebe H."/>
            <person name="Hishigaki H."/>
            <person name="Watanabe T."/>
            <person name="Sugiyama A."/>
            <person name="Takemoto M."/>
            <person name="Kawakami B."/>
            <person name="Yamazaki M."/>
            <person name="Watanabe K."/>
            <person name="Kumagai A."/>
            <person name="Itakura S."/>
            <person name="Fukuzumi Y."/>
            <person name="Fujimori Y."/>
            <person name="Komiyama M."/>
            <person name="Tashiro H."/>
            <person name="Tanigami A."/>
            <person name="Fujiwara T."/>
            <person name="Ono T."/>
            <person name="Yamada K."/>
            <person name="Fujii Y."/>
            <person name="Ozaki K."/>
            <person name="Hirao M."/>
            <person name="Ohmori Y."/>
            <person name="Kawabata A."/>
            <person name="Hikiji T."/>
            <person name="Kobatake N."/>
            <person name="Inagaki H."/>
            <person name="Ikema Y."/>
            <person name="Okamoto S."/>
            <person name="Okitani R."/>
            <person name="Kawakami T."/>
            <person name="Noguchi S."/>
            <person name="Itoh T."/>
            <person name="Shigeta K."/>
            <person name="Senba T."/>
            <person name="Matsumura K."/>
            <person name="Nakajima Y."/>
            <person name="Mizuno T."/>
            <person name="Morinaga M."/>
            <person name="Sasaki M."/>
            <person name="Togashi T."/>
            <person name="Oyama M."/>
            <person name="Hata H."/>
            <person name="Watanabe M."/>
            <person name="Komatsu T."/>
            <person name="Mizushima-Sugano J."/>
            <person name="Satoh T."/>
            <person name="Shirai Y."/>
            <person name="Takahashi Y."/>
            <person name="Nakagawa K."/>
            <person name="Okumura K."/>
            <person name="Nagase T."/>
            <person name="Nomura N."/>
            <person name="Kikuchi H."/>
            <person name="Masuho Y."/>
            <person name="Yamashita R."/>
            <person name="Nakai K."/>
            <person name="Yada T."/>
            <person name="Nakamura Y."/>
            <person name="Ohara O."/>
            <person name="Isogai T."/>
            <person name="Sugano S."/>
        </authorList>
    </citation>
    <scope>NUCLEOTIDE SEQUENCE [LARGE SCALE MRNA]</scope>
    <source>
        <tissue>Uterus</tissue>
    </source>
</reference>
<reference key="5">
    <citation type="submission" date="2005-09" db="EMBL/GenBank/DDBJ databases">
        <authorList>
            <person name="Mural R.J."/>
            <person name="Istrail S."/>
            <person name="Sutton G.G."/>
            <person name="Florea L."/>
            <person name="Halpern A.L."/>
            <person name="Mobarry C.M."/>
            <person name="Lippert R."/>
            <person name="Walenz B."/>
            <person name="Shatkay H."/>
            <person name="Dew I."/>
            <person name="Miller J.R."/>
            <person name="Flanigan M.J."/>
            <person name="Edwards N.J."/>
            <person name="Bolanos R."/>
            <person name="Fasulo D."/>
            <person name="Halldorsson B.V."/>
            <person name="Hannenhalli S."/>
            <person name="Turner R."/>
            <person name="Yooseph S."/>
            <person name="Lu F."/>
            <person name="Nusskern D.R."/>
            <person name="Shue B.C."/>
            <person name="Zheng X.H."/>
            <person name="Zhong F."/>
            <person name="Delcher A.L."/>
            <person name="Huson D.H."/>
            <person name="Kravitz S.A."/>
            <person name="Mouchard L."/>
            <person name="Reinert K."/>
            <person name="Remington K.A."/>
            <person name="Clark A.G."/>
            <person name="Waterman M.S."/>
            <person name="Eichler E.E."/>
            <person name="Adams M.D."/>
            <person name="Hunkapiller M.W."/>
            <person name="Myers E.W."/>
            <person name="Venter J.C."/>
        </authorList>
    </citation>
    <scope>NUCLEOTIDE SEQUENCE [LARGE SCALE GENOMIC DNA]</scope>
</reference>
<reference key="6">
    <citation type="journal article" date="2004" name="Genome Res.">
        <title>The status, quality, and expansion of the NIH full-length cDNA project: the Mammalian Gene Collection (MGC).</title>
        <authorList>
            <consortium name="The MGC Project Team"/>
        </authorList>
    </citation>
    <scope>NUCLEOTIDE SEQUENCE [LARGE SCALE MRNA]</scope>
    <source>
        <tissue>Bone</tissue>
        <tissue>Brain</tissue>
        <tissue>Muscle</tissue>
        <tissue>Pancreas</tissue>
        <tissue>Placenta</tissue>
    </source>
</reference>
<reference key="7">
    <citation type="journal article" date="1996" name="Eur. J. Biochem.">
        <title>Characterization of the human small-ribosomal-subunit proteins by N-terminal and internal sequencing, and mass spectrometry.</title>
        <authorList>
            <person name="Vladimirov S.N."/>
            <person name="Ivanov A.V."/>
            <person name="Karpova G.G."/>
            <person name="Musolyamov A.K."/>
            <person name="Egorov T.A."/>
            <person name="Thiede B."/>
            <person name="Wittmann-Liebold B."/>
            <person name="Otto A."/>
        </authorList>
    </citation>
    <scope>PROTEIN SEQUENCE OF 2-8</scope>
    <scope>CLEAVAGE OF INITIATOR METHIONINE</scope>
    <source>
        <tissue>Placenta</tissue>
    </source>
</reference>
<reference key="8">
    <citation type="submission" date="1992-11" db="EMBL/GenBank/DDBJ databases">
        <authorList>
            <person name="Bhat K.S."/>
        </authorList>
    </citation>
    <scope>NUCLEOTIDE SEQUENCE [MRNA] OF 12-127</scope>
</reference>
<reference key="9">
    <citation type="journal article" date="2005" name="Nat. Biotechnol.">
        <title>Immunoaffinity profiling of tyrosine phosphorylation in cancer cells.</title>
        <authorList>
            <person name="Rush J."/>
            <person name="Moritz A."/>
            <person name="Lee K.A."/>
            <person name="Guo A."/>
            <person name="Goss V.L."/>
            <person name="Spek E.J."/>
            <person name="Zhang H."/>
            <person name="Zha X.-M."/>
            <person name="Polakiewicz R.D."/>
            <person name="Comb M.J."/>
        </authorList>
    </citation>
    <scope>PHOSPHORYLATION [LARGE SCALE ANALYSIS] AT TYR-38</scope>
    <scope>IDENTIFICATION BY MASS SPECTROMETRY [LARGE SCALE ANALYSIS]</scope>
</reference>
<reference key="10">
    <citation type="journal article" date="2008" name="Mol. Cell">
        <title>Kinase-selective enrichment enables quantitative phosphoproteomics of the kinome across the cell cycle.</title>
        <authorList>
            <person name="Daub H."/>
            <person name="Olsen J.V."/>
            <person name="Bairlein M."/>
            <person name="Gnad F."/>
            <person name="Oppermann F.S."/>
            <person name="Korner R."/>
            <person name="Greff Z."/>
            <person name="Keri G."/>
            <person name="Stemmann O."/>
            <person name="Mann M."/>
        </authorList>
    </citation>
    <scope>IDENTIFICATION BY MASS SPECTROMETRY [LARGE SCALE ANALYSIS]</scope>
    <source>
        <tissue>Cervix carcinoma</tissue>
    </source>
</reference>
<reference key="11">
    <citation type="journal article" date="2009" name="Science">
        <title>Lysine acetylation targets protein complexes and co-regulates major cellular functions.</title>
        <authorList>
            <person name="Choudhary C."/>
            <person name="Kumar C."/>
            <person name="Gnad F."/>
            <person name="Nielsen M.L."/>
            <person name="Rehman M."/>
            <person name="Walther T.C."/>
            <person name="Olsen J.V."/>
            <person name="Mann M."/>
        </authorList>
    </citation>
    <scope>ACETYLATION [LARGE SCALE ANALYSIS] AT LYS-27</scope>
    <scope>IDENTIFICATION BY MASS SPECTROMETRY [LARGE SCALE ANALYSIS]</scope>
</reference>
<reference key="12">
    <citation type="journal article" date="2011" name="BMC Syst. Biol.">
        <title>Initial characterization of the human central proteome.</title>
        <authorList>
            <person name="Burkard T.R."/>
            <person name="Planyavsky M."/>
            <person name="Kaupe I."/>
            <person name="Breitwieser F.P."/>
            <person name="Buerckstuemmer T."/>
            <person name="Bennett K.L."/>
            <person name="Superti-Furga G."/>
            <person name="Colinge J."/>
        </authorList>
    </citation>
    <scope>IDENTIFICATION BY MASS SPECTROMETRY [LARGE SCALE ANALYSIS]</scope>
</reference>
<reference key="13">
    <citation type="journal article" date="2013" name="J. Proteome Res.">
        <title>Toward a comprehensive characterization of a human cancer cell phosphoproteome.</title>
        <authorList>
            <person name="Zhou H."/>
            <person name="Di Palma S."/>
            <person name="Preisinger C."/>
            <person name="Peng M."/>
            <person name="Polat A.N."/>
            <person name="Heck A.J."/>
            <person name="Mohammed S."/>
        </authorList>
    </citation>
    <scope>PHOSPHORYLATION [LARGE SCALE ANALYSIS] AT SER-30</scope>
    <scope>IDENTIFICATION BY MASS SPECTROMETRY [LARGE SCALE ANALYSIS]</scope>
    <source>
        <tissue>Erythroleukemia</tissue>
    </source>
</reference>
<reference key="14">
    <citation type="journal article" date="2014" name="Curr. Opin. Struct. Biol.">
        <title>A new system for naming ribosomal proteins.</title>
        <authorList>
            <person name="Ban N."/>
            <person name="Beckmann R."/>
            <person name="Cate J.H.D."/>
            <person name="Dinman J.D."/>
            <person name="Dragon F."/>
            <person name="Ellis S.R."/>
            <person name="Lafontaine D.L.J."/>
            <person name="Lindahl L."/>
            <person name="Liljas A."/>
            <person name="Lipton J.M."/>
            <person name="McAlear M.A."/>
            <person name="Moore P.B."/>
            <person name="Noller H.F."/>
            <person name="Ortega J."/>
            <person name="Panse V.G."/>
            <person name="Ramakrishnan V."/>
            <person name="Spahn C.M.T."/>
            <person name="Steitz T.A."/>
            <person name="Tchorzewski M."/>
            <person name="Tollervey D."/>
            <person name="Warren A.J."/>
            <person name="Williamson J.R."/>
            <person name="Wilson D."/>
            <person name="Yonath A."/>
            <person name="Yusupov M."/>
        </authorList>
    </citation>
    <scope>NOMENCLATURE</scope>
</reference>
<reference key="15">
    <citation type="journal article" date="2014" name="J. Proteomics">
        <title>An enzyme assisted RP-RPLC approach for in-depth analysis of human liver phosphoproteome.</title>
        <authorList>
            <person name="Bian Y."/>
            <person name="Song C."/>
            <person name="Cheng K."/>
            <person name="Dong M."/>
            <person name="Wang F."/>
            <person name="Huang J."/>
            <person name="Sun D."/>
            <person name="Wang L."/>
            <person name="Ye M."/>
            <person name="Zou H."/>
        </authorList>
    </citation>
    <scope>IDENTIFICATION BY MASS SPECTROMETRY [LARGE SCALE ANALYSIS]</scope>
    <source>
        <tissue>Liver</tissue>
    </source>
</reference>
<reference key="16">
    <citation type="journal article" date="2015" name="Proteomics">
        <title>N-terminome analysis of the human mitochondrial proteome.</title>
        <authorList>
            <person name="Vaca Jacome A.S."/>
            <person name="Rabilloud T."/>
            <person name="Schaeffer-Reiss C."/>
            <person name="Rompais M."/>
            <person name="Ayoub D."/>
            <person name="Lane L."/>
            <person name="Bairoch A."/>
            <person name="Van Dorsselaer A."/>
            <person name="Carapito C."/>
        </authorList>
    </citation>
    <scope>IDENTIFICATION BY MASS SPECTROMETRY [LARGE SCALE ANALYSIS]</scope>
</reference>
<reference key="17">
    <citation type="journal article" date="2017" name="Nat. Struct. Mol. Biol.">
        <title>Site-specific mapping of the human SUMO proteome reveals co-modification with phosphorylation.</title>
        <authorList>
            <person name="Hendriks I.A."/>
            <person name="Lyon D."/>
            <person name="Young C."/>
            <person name="Jensen L.J."/>
            <person name="Vertegaal A.C."/>
            <person name="Nielsen M.L."/>
        </authorList>
    </citation>
    <scope>SUMOYLATION [LARGE SCALE ANALYSIS] AT LYS-43</scope>
    <scope>IDENTIFICATION BY MASS SPECTROMETRY [LARGE SCALE ANALYSIS]</scope>
</reference>
<reference key="18">
    <citation type="journal article" date="2023" name="Cell">
        <title>An E3 ligase network engages GCN1 to promote the degradation of translation factors on stalled ribosomes.</title>
        <authorList>
            <person name="Oltion K."/>
            <person name="Carelli J.D."/>
            <person name="Yang T."/>
            <person name="See S.K."/>
            <person name="Wang H.Y."/>
            <person name="Kampmann M."/>
            <person name="Taunton J."/>
        </authorList>
    </citation>
    <scope>UBIQUITINATION AT LYS-27</scope>
</reference>
<reference key="19">
    <citation type="journal article" date="2013" name="Nature">
        <title>Structures of the human and Drosophila 80S ribosome.</title>
        <authorList>
            <person name="Anger A.M."/>
            <person name="Armache J.P."/>
            <person name="Berninghausen O."/>
            <person name="Habeck M."/>
            <person name="Subklewe M."/>
            <person name="Wilson D.N."/>
            <person name="Beckmann R."/>
        </authorList>
    </citation>
    <scope>STRUCTURE BY ELECTRON MICROSCOPY (5.0 ANGSTROMS) OF RIBOSOME</scope>
    <scope>FUNCTION</scope>
    <scope>SUBUNIT</scope>
    <scope>SUBCELLULAR LOCATION</scope>
</reference>
<reference evidence="9 10 11" key="20">
    <citation type="journal article" date="2021" name="Science">
        <title>Nucleolar maturation of the human small subunit processome.</title>
        <authorList>
            <person name="Singh S."/>
            <person name="Vanden Broeck A."/>
            <person name="Miller L."/>
            <person name="Chaker-Margot M."/>
            <person name="Klinge S."/>
        </authorList>
    </citation>
    <scope>STRUCTURE BY ELECTRON MICROSCOPY (2.70 ANGSTROMS)</scope>
    <scope>FUNCTION</scope>
    <scope>SUBUNIT</scope>
    <scope>SUBCELLULAR LOCATION</scope>
</reference>
<comment type="function">
    <text evidence="2 3">Component of the small ribosomal subunit. The ribosome is a large ribonucleoprotein complex responsible for the synthesis of proteins in the cell. Part of the small subunit (SSU) processome, first precursor of the small eukaryotic ribosomal subunit. During the assembly of the SSU processome in the nucleolus, many ribosome biogenesis factors, an RNA chaperone and ribosomal proteins associate with the nascent pre-rRNA and work in concert to generate RNA folding, modifications, rearrangements and cleavage as well as targeted degradation of pre-ribosomal RNA by the RNA exosome (PubMed:34516797).</text>
</comment>
<comment type="subunit">
    <text evidence="2 3">Component of the small ribosomal subunit. Part of the small subunit (SSU) processome, composed of more than 70 proteins and the RNA chaperone small nucleolar RNA (snoRNA) U3 (PubMed:34516797).</text>
</comment>
<comment type="interaction">
    <interactant intactId="EBI-351850">
        <id>P62277</id>
    </interactant>
    <interactant intactId="EBI-5323863">
        <id>Q5S007</id>
        <label>LRRK2</label>
    </interactant>
    <organismsDiffer>false</organismsDiffer>
    <experiments>3</experiments>
</comment>
<comment type="interaction">
    <interactant intactId="EBI-351850">
        <id>P62277</id>
    </interactant>
    <interactant intactId="EBI-358011">
        <id>Q99558</id>
        <label>MAP3K14</label>
    </interactant>
    <organismsDiffer>false</organismsDiffer>
    <experiments>3</experiments>
</comment>
<comment type="interaction">
    <interactant intactId="EBI-351850">
        <id>P62277</id>
    </interactant>
    <interactant intactId="EBI-935824">
        <id>Q53EL6</id>
        <label>PDCD4</label>
    </interactant>
    <organismsDiffer>false</organismsDiffer>
    <experiments>2</experiments>
</comment>
<comment type="subcellular location">
    <subcellularLocation>
        <location evidence="2">Cytoplasm</location>
    </subcellularLocation>
    <subcellularLocation>
        <location evidence="3">Nucleus</location>
        <location evidence="3">Nucleolus</location>
    </subcellularLocation>
</comment>
<comment type="PTM">
    <text evidence="4">Ubiquitinated at Lys-27 by RNF14 and RNF25 in response to ribosome collisions (ribosome stalling).</text>
</comment>
<comment type="similarity">
    <text evidence="7">Belongs to the universal ribosomal protein uS15 family.</text>
</comment>
<keyword id="KW-0002">3D-structure</keyword>
<keyword id="KW-0007">Acetylation</keyword>
<keyword id="KW-0963">Cytoplasm</keyword>
<keyword id="KW-0903">Direct protein sequencing</keyword>
<keyword id="KW-1017">Isopeptide bond</keyword>
<keyword id="KW-0539">Nucleus</keyword>
<keyword id="KW-0597">Phosphoprotein</keyword>
<keyword id="KW-1267">Proteomics identification</keyword>
<keyword id="KW-1185">Reference proteome</keyword>
<keyword id="KW-0687">Ribonucleoprotein</keyword>
<keyword id="KW-0689">Ribosomal protein</keyword>
<keyword id="KW-0832">Ubl conjugation</keyword>
<protein>
    <recommendedName>
        <fullName evidence="6">Small ribosomal subunit protein uS15</fullName>
    </recommendedName>
    <alternativeName>
        <fullName>40S ribosomal protein S13</fullName>
    </alternativeName>
</protein>
<organism>
    <name type="scientific">Homo sapiens</name>
    <name type="common">Human</name>
    <dbReference type="NCBI Taxonomy" id="9606"/>
    <lineage>
        <taxon>Eukaryota</taxon>
        <taxon>Metazoa</taxon>
        <taxon>Chordata</taxon>
        <taxon>Craniata</taxon>
        <taxon>Vertebrata</taxon>
        <taxon>Euteleostomi</taxon>
        <taxon>Mammalia</taxon>
        <taxon>Eutheria</taxon>
        <taxon>Euarchontoglires</taxon>
        <taxon>Primates</taxon>
        <taxon>Haplorrhini</taxon>
        <taxon>Catarrhini</taxon>
        <taxon>Hominidae</taxon>
        <taxon>Homo</taxon>
    </lineage>
</organism>
<evidence type="ECO:0000250" key="1">
    <source>
        <dbReference type="UniProtKB" id="P62301"/>
    </source>
</evidence>
<evidence type="ECO:0000269" key="2">
    <source>
    </source>
</evidence>
<evidence type="ECO:0000269" key="3">
    <source>
    </source>
</evidence>
<evidence type="ECO:0000269" key="4">
    <source>
    </source>
</evidence>
<evidence type="ECO:0000269" key="5">
    <source>
    </source>
</evidence>
<evidence type="ECO:0000303" key="6">
    <source>
    </source>
</evidence>
<evidence type="ECO:0000305" key="7"/>
<evidence type="ECO:0000312" key="8">
    <source>
        <dbReference type="HGNC" id="HGNC:10386"/>
    </source>
</evidence>
<evidence type="ECO:0007744" key="9">
    <source>
        <dbReference type="PDB" id="7MQ8"/>
    </source>
</evidence>
<evidence type="ECO:0007744" key="10">
    <source>
        <dbReference type="PDB" id="7MQ9"/>
    </source>
</evidence>
<evidence type="ECO:0007744" key="11">
    <source>
        <dbReference type="PDB" id="7MQA"/>
    </source>
</evidence>
<evidence type="ECO:0007744" key="12">
    <source>
    </source>
</evidence>
<evidence type="ECO:0007744" key="13">
    <source>
    </source>
</evidence>
<evidence type="ECO:0007744" key="14">
    <source>
    </source>
</evidence>
<evidence type="ECO:0007744" key="15">
    <source>
    </source>
</evidence>
<evidence type="ECO:0007829" key="16">
    <source>
        <dbReference type="PDB" id="6ZLW"/>
    </source>
</evidence>
<evidence type="ECO:0007829" key="17">
    <source>
        <dbReference type="PDB" id="6ZXG"/>
    </source>
</evidence>
<evidence type="ECO:0007829" key="18">
    <source>
        <dbReference type="PDB" id="7JQB"/>
    </source>
</evidence>
<evidence type="ECO:0007829" key="19">
    <source>
        <dbReference type="PDB" id="7R4X"/>
    </source>
</evidence>
<accession>P62277</accession>
<accession>B2R549</accession>
<accession>P19116</accession>
<accession>Q02546</accession>
<accession>Q29200</accession>
<accession>Q498Y0</accession>
<gene>
    <name evidence="8" type="primary">RPS13</name>
</gene>
<sequence length="151" mass="17222">MGRMHAPGKGLSQSALPYRRSVPTWLKLTSDDVKEQIYKLAKKGLTPSQIGVILRDSHGVAQVRFVTGNKILRILKSKGLAPDLPEDLYHLIKKAVAVRKHLERNRKDKDAKFRLILIESRIHRLARYYKTKRVLPPNWKYESSTASALVA</sequence>
<feature type="initiator methionine" description="Removed" evidence="5">
    <location>
        <position position="1"/>
    </location>
</feature>
<feature type="chain" id="PRO_0000115661" description="Small ribosomal subunit protein uS15">
    <location>
        <begin position="2"/>
        <end position="151"/>
    </location>
</feature>
<feature type="modified residue" description="N6-acetyllysine; alternate" evidence="13">
    <location>
        <position position="27"/>
    </location>
</feature>
<feature type="modified residue" description="N6-succinyllysine; alternate" evidence="1">
    <location>
        <position position="27"/>
    </location>
</feature>
<feature type="modified residue" description="Phosphoserine" evidence="14">
    <location>
        <position position="30"/>
    </location>
</feature>
<feature type="modified residue" description="N6-succinyllysine" evidence="1">
    <location>
        <position position="34"/>
    </location>
</feature>
<feature type="modified residue" description="Phosphotyrosine" evidence="12">
    <location>
        <position position="38"/>
    </location>
</feature>
<feature type="cross-link" description="Glycyl lysine isopeptide (Lys-Gly) (interchain with G-Cter in ubiquitin)" evidence="4">
    <location>
        <position position="27"/>
    </location>
</feature>
<feature type="cross-link" description="Glycyl lysine isopeptide (Lys-Gly) (interchain with G-Cter in SUMO2)" evidence="15">
    <location>
        <position position="43"/>
    </location>
</feature>
<feature type="sequence conflict" description="In Ref. 8; AAC15854." evidence="7" ref="8">
    <original>P</original>
    <variation>S</variation>
    <location>
        <position position="82"/>
    </location>
</feature>
<feature type="strand" evidence="19">
    <location>
        <begin position="4"/>
        <end position="7"/>
    </location>
</feature>
<feature type="helix" evidence="19">
    <location>
        <begin position="30"/>
        <end position="41"/>
    </location>
</feature>
<feature type="turn" evidence="19">
    <location>
        <begin position="42"/>
        <end position="44"/>
    </location>
</feature>
<feature type="helix" evidence="19">
    <location>
        <begin position="47"/>
        <end position="57"/>
    </location>
</feature>
<feature type="helix" evidence="19">
    <location>
        <begin position="63"/>
        <end position="67"/>
    </location>
</feature>
<feature type="helix" evidence="19">
    <location>
        <begin position="71"/>
        <end position="77"/>
    </location>
</feature>
<feature type="helix" evidence="19">
    <location>
        <begin position="86"/>
        <end position="103"/>
    </location>
</feature>
<feature type="helix" evidence="19">
    <location>
        <begin position="109"/>
        <end position="131"/>
    </location>
</feature>
<feature type="strand" evidence="18">
    <location>
        <begin position="133"/>
        <end position="135"/>
    </location>
</feature>
<feature type="turn" evidence="17">
    <location>
        <begin position="143"/>
        <end position="145"/>
    </location>
</feature>
<feature type="helix" evidence="16">
    <location>
        <begin position="146"/>
        <end position="149"/>
    </location>
</feature>
<name>RS13_HUMAN</name>